<protein>
    <recommendedName>
        <fullName evidence="1">Pyridoxal 5'-phosphate synthase subunit PdxT</fullName>
        <ecNumber evidence="1">4.3.3.6</ecNumber>
    </recommendedName>
    <alternativeName>
        <fullName evidence="1">Pdx2</fullName>
    </alternativeName>
    <alternativeName>
        <fullName evidence="1">Pyridoxal 5'-phosphate synthase glutaminase subunit</fullName>
        <ecNumber evidence="1">3.5.1.2</ecNumber>
    </alternativeName>
</protein>
<sequence length="186" mass="20888">MRVGVLSFQGGVVEHLEHIEKLNGKPVKVRSLEDLQKIDRLIIPGGESTTIGKFLKQSNMLQPLREKIYGGMPVWGTCAGMILLARKIENSEVNYINAIDITVRRNAYGSQVDSFNTKALIEEISLNEMPLVFIRAPYITRIGETVKALCTIDKNIVAAKSNNVLVTSFHPELADNLEFHEYFMKL</sequence>
<organism>
    <name type="scientific">Clostridium acetobutylicum (strain ATCC 824 / DSM 792 / JCM 1419 / IAM 19013 / LMG 5710 / NBRC 13948 / NRRL B-527 / VKM B-1787 / 2291 / W)</name>
    <dbReference type="NCBI Taxonomy" id="272562"/>
    <lineage>
        <taxon>Bacteria</taxon>
        <taxon>Bacillati</taxon>
        <taxon>Bacillota</taxon>
        <taxon>Clostridia</taxon>
        <taxon>Eubacteriales</taxon>
        <taxon>Clostridiaceae</taxon>
        <taxon>Clostridium</taxon>
    </lineage>
</organism>
<evidence type="ECO:0000255" key="1">
    <source>
        <dbReference type="HAMAP-Rule" id="MF_01615"/>
    </source>
</evidence>
<proteinExistence type="inferred from homology"/>
<keyword id="KW-0315">Glutamine amidotransferase</keyword>
<keyword id="KW-0378">Hydrolase</keyword>
<keyword id="KW-0456">Lyase</keyword>
<keyword id="KW-0663">Pyridoxal phosphate</keyword>
<keyword id="KW-1185">Reference proteome</keyword>
<name>PDXT_CLOAB</name>
<dbReference type="EC" id="4.3.3.6" evidence="1"/>
<dbReference type="EC" id="3.5.1.2" evidence="1"/>
<dbReference type="EMBL" id="AE001437">
    <property type="protein sequence ID" value="AAK78573.1"/>
    <property type="molecule type" value="Genomic_DNA"/>
</dbReference>
<dbReference type="PIR" id="B96973">
    <property type="entry name" value="B96973"/>
</dbReference>
<dbReference type="RefSeq" id="NP_347233.1">
    <property type="nucleotide sequence ID" value="NC_003030.1"/>
</dbReference>
<dbReference type="RefSeq" id="WP_010963915.1">
    <property type="nucleotide sequence ID" value="NC_003030.1"/>
</dbReference>
<dbReference type="SMR" id="Q97LG6"/>
<dbReference type="STRING" id="272562.CA_C0595"/>
<dbReference type="GeneID" id="44997106"/>
<dbReference type="KEGG" id="cac:CA_C0595"/>
<dbReference type="PATRIC" id="fig|272562.8.peg.798"/>
<dbReference type="eggNOG" id="COG0311">
    <property type="taxonomic scope" value="Bacteria"/>
</dbReference>
<dbReference type="HOGENOM" id="CLU_069674_2_0_9"/>
<dbReference type="OrthoDB" id="9810320at2"/>
<dbReference type="UniPathway" id="UPA00245"/>
<dbReference type="Proteomes" id="UP000000814">
    <property type="component" value="Chromosome"/>
</dbReference>
<dbReference type="GO" id="GO:0005829">
    <property type="term" value="C:cytosol"/>
    <property type="evidence" value="ECO:0007669"/>
    <property type="project" value="TreeGrafter"/>
</dbReference>
<dbReference type="GO" id="GO:1903600">
    <property type="term" value="C:glutaminase complex"/>
    <property type="evidence" value="ECO:0007669"/>
    <property type="project" value="TreeGrafter"/>
</dbReference>
<dbReference type="GO" id="GO:0004359">
    <property type="term" value="F:glutaminase activity"/>
    <property type="evidence" value="ECO:0007669"/>
    <property type="project" value="UniProtKB-UniRule"/>
</dbReference>
<dbReference type="GO" id="GO:0036381">
    <property type="term" value="F:pyridoxal 5'-phosphate synthase (glutamine hydrolysing) activity"/>
    <property type="evidence" value="ECO:0007669"/>
    <property type="project" value="UniProtKB-UniRule"/>
</dbReference>
<dbReference type="GO" id="GO:0006543">
    <property type="term" value="P:glutamine catabolic process"/>
    <property type="evidence" value="ECO:0007669"/>
    <property type="project" value="UniProtKB-UniRule"/>
</dbReference>
<dbReference type="GO" id="GO:0042823">
    <property type="term" value="P:pyridoxal phosphate biosynthetic process"/>
    <property type="evidence" value="ECO:0007669"/>
    <property type="project" value="UniProtKB-UniRule"/>
</dbReference>
<dbReference type="GO" id="GO:0008614">
    <property type="term" value="P:pyridoxine metabolic process"/>
    <property type="evidence" value="ECO:0007669"/>
    <property type="project" value="TreeGrafter"/>
</dbReference>
<dbReference type="CDD" id="cd01749">
    <property type="entry name" value="GATase1_PB"/>
    <property type="match status" value="1"/>
</dbReference>
<dbReference type="FunFam" id="3.40.50.880:FF:000010">
    <property type="entry name" value="uncharacterized protein LOC100176842 isoform X2"/>
    <property type="match status" value="1"/>
</dbReference>
<dbReference type="Gene3D" id="3.40.50.880">
    <property type="match status" value="1"/>
</dbReference>
<dbReference type="HAMAP" id="MF_01615">
    <property type="entry name" value="PdxT"/>
    <property type="match status" value="1"/>
</dbReference>
<dbReference type="InterPro" id="IPR029062">
    <property type="entry name" value="Class_I_gatase-like"/>
</dbReference>
<dbReference type="InterPro" id="IPR002161">
    <property type="entry name" value="PdxT/SNO"/>
</dbReference>
<dbReference type="InterPro" id="IPR021196">
    <property type="entry name" value="PdxT/SNO_CS"/>
</dbReference>
<dbReference type="NCBIfam" id="TIGR03800">
    <property type="entry name" value="PLP_synth_Pdx2"/>
    <property type="match status" value="1"/>
</dbReference>
<dbReference type="PANTHER" id="PTHR31559">
    <property type="entry name" value="PYRIDOXAL 5'-PHOSPHATE SYNTHASE SUBUNIT SNO"/>
    <property type="match status" value="1"/>
</dbReference>
<dbReference type="PANTHER" id="PTHR31559:SF0">
    <property type="entry name" value="PYRIDOXAL 5'-PHOSPHATE SYNTHASE SUBUNIT SNO1-RELATED"/>
    <property type="match status" value="1"/>
</dbReference>
<dbReference type="Pfam" id="PF01174">
    <property type="entry name" value="SNO"/>
    <property type="match status" value="1"/>
</dbReference>
<dbReference type="PIRSF" id="PIRSF005639">
    <property type="entry name" value="Glut_amidoT_SNO"/>
    <property type="match status" value="1"/>
</dbReference>
<dbReference type="SUPFAM" id="SSF52317">
    <property type="entry name" value="Class I glutamine amidotransferase-like"/>
    <property type="match status" value="1"/>
</dbReference>
<dbReference type="PROSITE" id="PS01236">
    <property type="entry name" value="PDXT_SNO_1"/>
    <property type="match status" value="1"/>
</dbReference>
<dbReference type="PROSITE" id="PS51130">
    <property type="entry name" value="PDXT_SNO_2"/>
    <property type="match status" value="1"/>
</dbReference>
<gene>
    <name evidence="1" type="primary">pdxT</name>
    <name type="ordered locus">CA_C0595</name>
</gene>
<accession>Q97LG6</accession>
<feature type="chain" id="PRO_0000135634" description="Pyridoxal 5'-phosphate synthase subunit PdxT">
    <location>
        <begin position="1"/>
        <end position="186"/>
    </location>
</feature>
<feature type="active site" description="Nucleophile" evidence="1">
    <location>
        <position position="78"/>
    </location>
</feature>
<feature type="active site" description="Charge relay system" evidence="1">
    <location>
        <position position="170"/>
    </location>
</feature>
<feature type="active site" description="Charge relay system" evidence="1">
    <location>
        <position position="172"/>
    </location>
</feature>
<feature type="binding site" evidence="1">
    <location>
        <begin position="46"/>
        <end position="48"/>
    </location>
    <ligand>
        <name>L-glutamine</name>
        <dbReference type="ChEBI" id="CHEBI:58359"/>
    </ligand>
</feature>
<feature type="binding site" evidence="1">
    <location>
        <position position="105"/>
    </location>
    <ligand>
        <name>L-glutamine</name>
        <dbReference type="ChEBI" id="CHEBI:58359"/>
    </ligand>
</feature>
<feature type="binding site" evidence="1">
    <location>
        <begin position="134"/>
        <end position="135"/>
    </location>
    <ligand>
        <name>L-glutamine</name>
        <dbReference type="ChEBI" id="CHEBI:58359"/>
    </ligand>
</feature>
<comment type="function">
    <text evidence="1">Catalyzes the hydrolysis of glutamine to glutamate and ammonia as part of the biosynthesis of pyridoxal 5'-phosphate. The resulting ammonia molecule is channeled to the active site of PdxS.</text>
</comment>
<comment type="catalytic activity">
    <reaction evidence="1">
        <text>aldehydo-D-ribose 5-phosphate + D-glyceraldehyde 3-phosphate + L-glutamine = pyridoxal 5'-phosphate + L-glutamate + phosphate + 3 H2O + H(+)</text>
        <dbReference type="Rhea" id="RHEA:31507"/>
        <dbReference type="ChEBI" id="CHEBI:15377"/>
        <dbReference type="ChEBI" id="CHEBI:15378"/>
        <dbReference type="ChEBI" id="CHEBI:29985"/>
        <dbReference type="ChEBI" id="CHEBI:43474"/>
        <dbReference type="ChEBI" id="CHEBI:58273"/>
        <dbReference type="ChEBI" id="CHEBI:58359"/>
        <dbReference type="ChEBI" id="CHEBI:59776"/>
        <dbReference type="ChEBI" id="CHEBI:597326"/>
        <dbReference type="EC" id="4.3.3.6"/>
    </reaction>
</comment>
<comment type="catalytic activity">
    <reaction evidence="1">
        <text>L-glutamine + H2O = L-glutamate + NH4(+)</text>
        <dbReference type="Rhea" id="RHEA:15889"/>
        <dbReference type="ChEBI" id="CHEBI:15377"/>
        <dbReference type="ChEBI" id="CHEBI:28938"/>
        <dbReference type="ChEBI" id="CHEBI:29985"/>
        <dbReference type="ChEBI" id="CHEBI:58359"/>
        <dbReference type="EC" id="3.5.1.2"/>
    </reaction>
</comment>
<comment type="pathway">
    <text evidence="1">Cofactor biosynthesis; pyridoxal 5'-phosphate biosynthesis.</text>
</comment>
<comment type="subunit">
    <text evidence="1">In the presence of PdxS, forms a dodecamer of heterodimers. Only shows activity in the heterodimer.</text>
</comment>
<comment type="similarity">
    <text evidence="1">Belongs to the glutaminase PdxT/SNO family.</text>
</comment>
<reference key="1">
    <citation type="journal article" date="2001" name="J. Bacteriol.">
        <title>Genome sequence and comparative analysis of the solvent-producing bacterium Clostridium acetobutylicum.</title>
        <authorList>
            <person name="Noelling J."/>
            <person name="Breton G."/>
            <person name="Omelchenko M.V."/>
            <person name="Makarova K.S."/>
            <person name="Zeng Q."/>
            <person name="Gibson R."/>
            <person name="Lee H.M."/>
            <person name="Dubois J."/>
            <person name="Qiu D."/>
            <person name="Hitti J."/>
            <person name="Wolf Y.I."/>
            <person name="Tatusov R.L."/>
            <person name="Sabathe F."/>
            <person name="Doucette-Stamm L.A."/>
            <person name="Soucaille P."/>
            <person name="Daly M.J."/>
            <person name="Bennett G.N."/>
            <person name="Koonin E.V."/>
            <person name="Smith D.R."/>
        </authorList>
    </citation>
    <scope>NUCLEOTIDE SEQUENCE [LARGE SCALE GENOMIC DNA]</scope>
    <source>
        <strain>ATCC 824 / DSM 792 / JCM 1419 / IAM 19013 / LMG 5710 / NBRC 13948 / NRRL B-527 / VKM B-1787 / 2291 / W</strain>
    </source>
</reference>